<name>ADHX_PEA</name>
<evidence type="ECO:0000250" key="1">
    <source>
        <dbReference type="UniProtKB" id="P00327"/>
    </source>
</evidence>
<evidence type="ECO:0000250" key="2">
    <source>
        <dbReference type="UniProtKB" id="P06525"/>
    </source>
</evidence>
<evidence type="ECO:0000250" key="3">
    <source>
        <dbReference type="UniProtKB" id="Q96533"/>
    </source>
</evidence>
<evidence type="ECO:0000269" key="4">
    <source>
    </source>
</evidence>
<evidence type="ECO:0000269" key="5">
    <source>
    </source>
</evidence>
<evidence type="ECO:0000305" key="6"/>
<organism>
    <name type="scientific">Pisum sativum</name>
    <name type="common">Garden pea</name>
    <name type="synonym">Lathyrus oleraceus</name>
    <dbReference type="NCBI Taxonomy" id="3888"/>
    <lineage>
        <taxon>Eukaryota</taxon>
        <taxon>Viridiplantae</taxon>
        <taxon>Streptophyta</taxon>
        <taxon>Embryophyta</taxon>
        <taxon>Tracheophyta</taxon>
        <taxon>Spermatophyta</taxon>
        <taxon>Magnoliopsida</taxon>
        <taxon>eudicotyledons</taxon>
        <taxon>Gunneridae</taxon>
        <taxon>Pentapetalae</taxon>
        <taxon>rosids</taxon>
        <taxon>fabids</taxon>
        <taxon>Fabales</taxon>
        <taxon>Fabaceae</taxon>
        <taxon>Papilionoideae</taxon>
        <taxon>50 kb inversion clade</taxon>
        <taxon>NPAAA clade</taxon>
        <taxon>Hologalegina</taxon>
        <taxon>IRL clade</taxon>
        <taxon>Fabeae</taxon>
        <taxon>Pisum</taxon>
    </lineage>
</organism>
<keyword id="KW-0007">Acetylation</keyword>
<keyword id="KW-0963">Cytoplasm</keyword>
<keyword id="KW-0903">Direct protein sequencing</keyword>
<keyword id="KW-0479">Metal-binding</keyword>
<keyword id="KW-0520">NAD</keyword>
<keyword id="KW-0560">Oxidoreductase</keyword>
<keyword id="KW-0862">Zinc</keyword>
<comment type="function">
    <text evidence="5">Class-III ADH is remarkably ineffective in oxidizing ethanol, but it readily catalyzes the oxidation of long-chain primary alcohols and the oxidation of S-(hydroxymethyl) glutathione.</text>
</comment>
<comment type="catalytic activity">
    <reaction evidence="5">
        <text>a primary alcohol + NAD(+) = an aldehyde + NADH + H(+)</text>
        <dbReference type="Rhea" id="RHEA:10736"/>
        <dbReference type="ChEBI" id="CHEBI:15378"/>
        <dbReference type="ChEBI" id="CHEBI:15734"/>
        <dbReference type="ChEBI" id="CHEBI:17478"/>
        <dbReference type="ChEBI" id="CHEBI:57540"/>
        <dbReference type="ChEBI" id="CHEBI:57945"/>
        <dbReference type="EC" id="1.1.1.1"/>
    </reaction>
</comment>
<comment type="catalytic activity">
    <reaction evidence="5">
        <text>a secondary alcohol + NAD(+) = a ketone + NADH + H(+)</text>
        <dbReference type="Rhea" id="RHEA:10740"/>
        <dbReference type="ChEBI" id="CHEBI:15378"/>
        <dbReference type="ChEBI" id="CHEBI:17087"/>
        <dbReference type="ChEBI" id="CHEBI:35681"/>
        <dbReference type="ChEBI" id="CHEBI:57540"/>
        <dbReference type="ChEBI" id="CHEBI:57945"/>
        <dbReference type="EC" id="1.1.1.1"/>
    </reaction>
</comment>
<comment type="catalytic activity">
    <reaction evidence="5">
        <text>S-(hydroxymethyl)glutathione + NADP(+) = S-formylglutathione + NADPH + H(+)</text>
        <dbReference type="Rhea" id="RHEA:19981"/>
        <dbReference type="ChEBI" id="CHEBI:15378"/>
        <dbReference type="ChEBI" id="CHEBI:57688"/>
        <dbReference type="ChEBI" id="CHEBI:57783"/>
        <dbReference type="ChEBI" id="CHEBI:58349"/>
        <dbReference type="ChEBI" id="CHEBI:58758"/>
        <dbReference type="EC" id="1.1.1.284"/>
    </reaction>
</comment>
<comment type="catalytic activity">
    <reaction evidence="5">
        <text>S-(hydroxymethyl)glutathione + NAD(+) = S-formylglutathione + NADH + H(+)</text>
        <dbReference type="Rhea" id="RHEA:19985"/>
        <dbReference type="ChEBI" id="CHEBI:15378"/>
        <dbReference type="ChEBI" id="CHEBI:57540"/>
        <dbReference type="ChEBI" id="CHEBI:57688"/>
        <dbReference type="ChEBI" id="CHEBI:57945"/>
        <dbReference type="ChEBI" id="CHEBI:58758"/>
        <dbReference type="EC" id="1.1.1.284"/>
    </reaction>
</comment>
<comment type="cofactor">
    <cofactor evidence="3">
        <name>Zn(2+)</name>
        <dbReference type="ChEBI" id="CHEBI:29105"/>
    </cofactor>
    <text evidence="3">Binds 2 Zn(2+) ions per subunit.</text>
</comment>
<comment type="biophysicochemical properties">
    <kinetics>
        <KM evidence="5">840 uM for octanol (at pH 10)</KM>
        <KM evidence="5">180 uM for 12-OH-dodecanoic acid (at pH 10)</KM>
        <KM evidence="5">6.5 uM for NAD(+) (at pH 10)</KM>
        <KM evidence="5">2 uM for S-(hydroxymethyl)glutathione (at pH 8)</KM>
        <text evidence="5">kcat is 190 min(-1) with octanol as substrate (at pH 10). kcat is 110 min(-1) with 12-OH-dodecanoic acid as substrate (at pH 10). kcat is 380 min(-1) with S-hydroxymethylglutathione as substrate (at pH 8).</text>
    </kinetics>
</comment>
<comment type="subunit">
    <text evidence="3">Homodimer.</text>
</comment>
<comment type="subcellular location">
    <subcellularLocation>
        <location evidence="2">Cytoplasm</location>
    </subcellularLocation>
</comment>
<comment type="similarity">
    <text evidence="6">Belongs to the zinc-containing alcohol dehydrogenase family. Class-III subfamily.</text>
</comment>
<proteinExistence type="evidence at protein level"/>
<feature type="chain" id="PRO_0000160774" description="Alcohol dehydrogenase class-3">
    <location>
        <begin position="1"/>
        <end position="378"/>
    </location>
</feature>
<feature type="binding site" evidence="3">
    <location>
        <position position="46"/>
    </location>
    <ligand>
        <name>Zn(2+)</name>
        <dbReference type="ChEBI" id="CHEBI:29105"/>
        <label>1</label>
        <note>catalytic</note>
    </ligand>
</feature>
<feature type="binding site" evidence="3">
    <location>
        <position position="47"/>
    </location>
    <ligand>
        <name>NAD(+)</name>
        <dbReference type="ChEBI" id="CHEBI:57540"/>
    </ligand>
</feature>
<feature type="binding site" evidence="2">
    <location>
        <position position="48"/>
    </location>
    <ligand>
        <name>an alcohol</name>
        <dbReference type="ChEBI" id="CHEBI:30879"/>
    </ligand>
</feature>
<feature type="binding site" evidence="1">
    <location>
        <position position="68"/>
    </location>
    <ligand>
        <name>an alcohol</name>
        <dbReference type="ChEBI" id="CHEBI:30879"/>
    </ligand>
</feature>
<feature type="binding site" evidence="3">
    <location>
        <position position="68"/>
    </location>
    <ligand>
        <name>Zn(2+)</name>
        <dbReference type="ChEBI" id="CHEBI:29105"/>
        <label>1</label>
        <note>catalytic</note>
    </ligand>
</feature>
<feature type="binding site" evidence="3">
    <location>
        <position position="69"/>
    </location>
    <ligand>
        <name>Zn(2+)</name>
        <dbReference type="ChEBI" id="CHEBI:29105"/>
        <label>1</label>
        <note>catalytic</note>
    </ligand>
</feature>
<feature type="binding site" evidence="3">
    <location>
        <position position="98"/>
    </location>
    <ligand>
        <name>Zn(2+)</name>
        <dbReference type="ChEBI" id="CHEBI:29105"/>
        <label>2</label>
    </ligand>
</feature>
<feature type="binding site" evidence="3">
    <location>
        <position position="101"/>
    </location>
    <ligand>
        <name>Zn(2+)</name>
        <dbReference type="ChEBI" id="CHEBI:29105"/>
        <label>2</label>
    </ligand>
</feature>
<feature type="binding site" evidence="3">
    <location>
        <position position="104"/>
    </location>
    <ligand>
        <name>Zn(2+)</name>
        <dbReference type="ChEBI" id="CHEBI:29105"/>
        <label>2</label>
    </ligand>
</feature>
<feature type="binding site" evidence="3">
    <location>
        <position position="112"/>
    </location>
    <ligand>
        <name>Zn(2+)</name>
        <dbReference type="ChEBI" id="CHEBI:29105"/>
        <label>2</label>
    </ligand>
</feature>
<feature type="binding site" evidence="3">
    <location>
        <position position="176"/>
    </location>
    <ligand>
        <name>Zn(2+)</name>
        <dbReference type="ChEBI" id="CHEBI:29105"/>
        <label>1</label>
        <note>catalytic</note>
    </ligand>
</feature>
<feature type="binding site" evidence="3">
    <location>
        <begin position="201"/>
        <end position="206"/>
    </location>
    <ligand>
        <name>NAD(+)</name>
        <dbReference type="ChEBI" id="CHEBI:57540"/>
    </ligand>
</feature>
<feature type="binding site" evidence="3">
    <location>
        <position position="225"/>
    </location>
    <ligand>
        <name>NAD(+)</name>
        <dbReference type="ChEBI" id="CHEBI:57540"/>
    </ligand>
</feature>
<feature type="binding site" evidence="3">
    <location>
        <position position="230"/>
    </location>
    <ligand>
        <name>NAD(+)</name>
        <dbReference type="ChEBI" id="CHEBI:57540"/>
    </ligand>
</feature>
<feature type="binding site" evidence="3">
    <location>
        <begin position="294"/>
        <end position="296"/>
    </location>
    <ligand>
        <name>NAD(+)</name>
        <dbReference type="ChEBI" id="CHEBI:57540"/>
    </ligand>
</feature>
<feature type="binding site" evidence="3">
    <location>
        <begin position="319"/>
        <end position="321"/>
    </location>
    <ligand>
        <name>NAD(+)</name>
        <dbReference type="ChEBI" id="CHEBI:57540"/>
    </ligand>
</feature>
<feature type="binding site" evidence="3">
    <location>
        <position position="371"/>
    </location>
    <ligand>
        <name>NAD(+)</name>
        <dbReference type="ChEBI" id="CHEBI:57540"/>
    </ligand>
</feature>
<feature type="modified residue" description="N-acetylalanine" evidence="4 5">
    <location>
        <position position="1"/>
    </location>
</feature>
<dbReference type="EC" id="1.1.1.1" evidence="5"/>
<dbReference type="EC" id="1.1.1.-"/>
<dbReference type="EC" id="1.1.1.284" evidence="5"/>
<dbReference type="PIR" id="S66198">
    <property type="entry name" value="S66198"/>
</dbReference>
<dbReference type="SMR" id="P80572"/>
<dbReference type="iPTMnet" id="P80572"/>
<dbReference type="GO" id="GO:0005829">
    <property type="term" value="C:cytosol"/>
    <property type="evidence" value="ECO:0007669"/>
    <property type="project" value="TreeGrafter"/>
</dbReference>
<dbReference type="GO" id="GO:0004022">
    <property type="term" value="F:alcohol dehydrogenase (NAD+) activity"/>
    <property type="evidence" value="ECO:0007669"/>
    <property type="project" value="UniProtKB-EC"/>
</dbReference>
<dbReference type="GO" id="GO:0106322">
    <property type="term" value="F:S-(hydroxymethyl)glutathione dehydrogenase (NAD+) activity"/>
    <property type="evidence" value="ECO:0007669"/>
    <property type="project" value="RHEA"/>
</dbReference>
<dbReference type="GO" id="GO:0106321">
    <property type="term" value="F:S-(hydroxymethyl)glutathione dehydrogenase (NADP+) activity"/>
    <property type="evidence" value="ECO:0007669"/>
    <property type="project" value="RHEA"/>
</dbReference>
<dbReference type="GO" id="GO:0008270">
    <property type="term" value="F:zinc ion binding"/>
    <property type="evidence" value="ECO:0007669"/>
    <property type="project" value="InterPro"/>
</dbReference>
<dbReference type="GO" id="GO:0046294">
    <property type="term" value="P:formaldehyde catabolic process"/>
    <property type="evidence" value="ECO:0007669"/>
    <property type="project" value="InterPro"/>
</dbReference>
<dbReference type="CDD" id="cd08300">
    <property type="entry name" value="alcohol_DH_class_III"/>
    <property type="match status" value="1"/>
</dbReference>
<dbReference type="FunFam" id="3.40.50.720:FF:000003">
    <property type="entry name" value="S-(hydroxymethyl)glutathione dehydrogenase"/>
    <property type="match status" value="1"/>
</dbReference>
<dbReference type="FunFam" id="3.90.180.10:FF:000001">
    <property type="entry name" value="S-(hydroxymethyl)glutathione dehydrogenase"/>
    <property type="match status" value="1"/>
</dbReference>
<dbReference type="Gene3D" id="3.90.180.10">
    <property type="entry name" value="Medium-chain alcohol dehydrogenases, catalytic domain"/>
    <property type="match status" value="1"/>
</dbReference>
<dbReference type="Gene3D" id="3.40.50.720">
    <property type="entry name" value="NAD(P)-binding Rossmann-like Domain"/>
    <property type="match status" value="1"/>
</dbReference>
<dbReference type="InterPro" id="IPR013149">
    <property type="entry name" value="ADH-like_C"/>
</dbReference>
<dbReference type="InterPro" id="IPR013154">
    <property type="entry name" value="ADH-like_N"/>
</dbReference>
<dbReference type="InterPro" id="IPR014183">
    <property type="entry name" value="ADH_3"/>
</dbReference>
<dbReference type="InterPro" id="IPR002328">
    <property type="entry name" value="ADH_Zn_CS"/>
</dbReference>
<dbReference type="InterPro" id="IPR011032">
    <property type="entry name" value="GroES-like_sf"/>
</dbReference>
<dbReference type="InterPro" id="IPR036291">
    <property type="entry name" value="NAD(P)-bd_dom_sf"/>
</dbReference>
<dbReference type="NCBIfam" id="TIGR02818">
    <property type="entry name" value="adh_III_F_hyde"/>
    <property type="match status" value="1"/>
</dbReference>
<dbReference type="PANTHER" id="PTHR43880">
    <property type="entry name" value="ALCOHOL DEHYDROGENASE"/>
    <property type="match status" value="1"/>
</dbReference>
<dbReference type="PANTHER" id="PTHR43880:SF58">
    <property type="entry name" value="ALCOHOL DEHYDROGENASE CLASS-3"/>
    <property type="match status" value="1"/>
</dbReference>
<dbReference type="Pfam" id="PF08240">
    <property type="entry name" value="ADH_N"/>
    <property type="match status" value="1"/>
</dbReference>
<dbReference type="Pfam" id="PF00107">
    <property type="entry name" value="ADH_zinc_N"/>
    <property type="match status" value="1"/>
</dbReference>
<dbReference type="SUPFAM" id="SSF50129">
    <property type="entry name" value="GroES-like"/>
    <property type="match status" value="2"/>
</dbReference>
<dbReference type="SUPFAM" id="SSF51735">
    <property type="entry name" value="NAD(P)-binding Rossmann-fold domains"/>
    <property type="match status" value="1"/>
</dbReference>
<dbReference type="PROSITE" id="PS00059">
    <property type="entry name" value="ADH_ZINC"/>
    <property type="match status" value="1"/>
</dbReference>
<protein>
    <recommendedName>
        <fullName>Alcohol dehydrogenase class-3</fullName>
        <ecNumber evidence="5">1.1.1.1</ecNumber>
    </recommendedName>
    <alternativeName>
        <fullName>Alcohol dehydrogenase class-III</fullName>
    </alternativeName>
    <alternativeName>
        <fullName>Glutathione-dependent formaldehyde dehydrogenase</fullName>
        <shortName>FALDH</shortName>
        <shortName>FDH</shortName>
        <shortName>GSH-FDH</shortName>
        <ecNumber>1.1.1.-</ecNumber>
    </alternativeName>
    <alternativeName>
        <fullName>S-(hydroxymethyl)glutathione dehydrogenase</fullName>
        <ecNumber evidence="5">1.1.1.284</ecNumber>
    </alternativeName>
</protein>
<reference key="1">
    <citation type="journal article" date="1996" name="Proc. Natl. Acad. Sci. U.S.A.">
        <title>Pea formaldehyde-active class III alcohol dehydrogenase: common derivation of the plant and animal forms but not of the corresponding ethanol-active forms (classes I and P).</title>
        <authorList>
            <person name="Shafqat J."/>
            <person name="El-Ahmad M."/>
            <person name="Danielsson O."/>
            <person name="Martinez M.C."/>
            <person name="Persson B."/>
            <person name="Pares X."/>
            <person name="Joernvall H."/>
        </authorList>
    </citation>
    <scope>PROTEIN SEQUENCE</scope>
    <scope>ACETYLATION AT ALA-1</scope>
    <scope>FUNCTION</scope>
    <scope>CATALYTIC ACTIVITY</scope>
    <scope>BIOPHYSICOCHEMICAL PROPERTIES</scope>
</reference>
<reference key="2">
    <citation type="journal article" date="1995" name="FEBS Lett.">
        <title>Multiplicity of N-terminal structures of medium-chain alcohol dehydrogenases. Mass-spectrometric analysis of plant, lower vertebrate and higher vertebrate class I, II, and III forms of the enzyme.</title>
        <authorList>
            <person name="Hjelmqvist L."/>
            <person name="Hackett M."/>
            <person name="Shafqat J."/>
            <person name="Danielsson O."/>
            <person name="Iida J."/>
            <person name="Hendrickson R.C."/>
            <person name="Michel H."/>
            <person name="Shabanowitz J."/>
            <person name="Hunt D.F."/>
            <person name="Joernvall H."/>
        </authorList>
    </citation>
    <scope>PARTIAL PROTEIN SEQUENCE</scope>
    <scope>ACETYLATION AT ALA-1</scope>
</reference>
<accession>P80572</accession>
<sequence>ATQGQVITCKAAVAWEPNKPLTIEDVEVAPPQANEVRIQILFTALCHTDAYTLGGKDPEGLFPCILGHEAAGIVESVGEGVTDVKPGDHVIPSYQAECGECKFCKSPKTNLCGKVRAATGVGVMMADRKSRFSVKGKPIYHFMGTSTFSQYTVVHDVSVAKIHPDAPLDKVCLLGCGVPTGLGAVWNTAKVEPGSIVAIFGLGTVGLAVAEGAKSAGASRIIGIDIDSNKYDTAKNFGVTEFINPKDHEKPIQQVIIDLTDGGVDYSFECLGNVSVMRSALECCHKGWGTSVIVGVAASGQEISTRPFQLVTGRVWKGTAFGGFKSRSQVPWLVEKYLKKEIKVDEYITHNLTLLEINKAFDLLHEGQCLRCVLAVHD</sequence>